<name>HIS1_PROM4</name>
<reference key="1">
    <citation type="journal article" date="2007" name="PLoS Genet.">
        <title>Patterns and implications of gene gain and loss in the evolution of Prochlorococcus.</title>
        <authorList>
            <person name="Kettler G.C."/>
            <person name="Martiny A.C."/>
            <person name="Huang K."/>
            <person name="Zucker J."/>
            <person name="Coleman M.L."/>
            <person name="Rodrigue S."/>
            <person name="Chen F."/>
            <person name="Lapidus A."/>
            <person name="Ferriera S."/>
            <person name="Johnson J."/>
            <person name="Steglich C."/>
            <person name="Church G.M."/>
            <person name="Richardson P."/>
            <person name="Chisholm S.W."/>
        </authorList>
    </citation>
    <scope>NUCLEOTIDE SEQUENCE [LARGE SCALE GENOMIC DNA]</scope>
    <source>
        <strain>MIT 9211</strain>
    </source>
</reference>
<dbReference type="EC" id="2.4.2.17" evidence="1"/>
<dbReference type="EMBL" id="CP000878">
    <property type="protein sequence ID" value="ABX08494.1"/>
    <property type="molecule type" value="Genomic_DNA"/>
</dbReference>
<dbReference type="RefSeq" id="WP_012195116.1">
    <property type="nucleotide sequence ID" value="NC_009976.1"/>
</dbReference>
<dbReference type="SMR" id="A9BEI4"/>
<dbReference type="STRING" id="93059.P9211_05631"/>
<dbReference type="KEGG" id="pmj:P9211_05631"/>
<dbReference type="eggNOG" id="COG0040">
    <property type="taxonomic scope" value="Bacteria"/>
</dbReference>
<dbReference type="HOGENOM" id="CLU_038115_2_0_3"/>
<dbReference type="OrthoDB" id="9801867at2"/>
<dbReference type="UniPathway" id="UPA00031">
    <property type="reaction ID" value="UER00006"/>
</dbReference>
<dbReference type="Proteomes" id="UP000000788">
    <property type="component" value="Chromosome"/>
</dbReference>
<dbReference type="GO" id="GO:0005737">
    <property type="term" value="C:cytoplasm"/>
    <property type="evidence" value="ECO:0007669"/>
    <property type="project" value="UniProtKB-SubCell"/>
</dbReference>
<dbReference type="GO" id="GO:0005524">
    <property type="term" value="F:ATP binding"/>
    <property type="evidence" value="ECO:0007669"/>
    <property type="project" value="UniProtKB-KW"/>
</dbReference>
<dbReference type="GO" id="GO:0003879">
    <property type="term" value="F:ATP phosphoribosyltransferase activity"/>
    <property type="evidence" value="ECO:0007669"/>
    <property type="project" value="UniProtKB-UniRule"/>
</dbReference>
<dbReference type="GO" id="GO:0000105">
    <property type="term" value="P:L-histidine biosynthetic process"/>
    <property type="evidence" value="ECO:0007669"/>
    <property type="project" value="UniProtKB-UniRule"/>
</dbReference>
<dbReference type="CDD" id="cd13595">
    <property type="entry name" value="PBP2_HisGs"/>
    <property type="match status" value="1"/>
</dbReference>
<dbReference type="FunFam" id="3.40.190.10:FF:000008">
    <property type="entry name" value="ATP phosphoribosyltransferase"/>
    <property type="match status" value="1"/>
</dbReference>
<dbReference type="Gene3D" id="3.40.190.10">
    <property type="entry name" value="Periplasmic binding protein-like II"/>
    <property type="match status" value="2"/>
</dbReference>
<dbReference type="HAMAP" id="MF_01018">
    <property type="entry name" value="HisG_Short"/>
    <property type="match status" value="1"/>
</dbReference>
<dbReference type="InterPro" id="IPR013820">
    <property type="entry name" value="ATP_PRibTrfase_cat"/>
</dbReference>
<dbReference type="InterPro" id="IPR018198">
    <property type="entry name" value="ATP_PRibTrfase_CS"/>
</dbReference>
<dbReference type="InterPro" id="IPR001348">
    <property type="entry name" value="ATP_PRibTrfase_HisG"/>
</dbReference>
<dbReference type="InterPro" id="IPR024893">
    <property type="entry name" value="ATP_PRibTrfase_HisG_short"/>
</dbReference>
<dbReference type="NCBIfam" id="TIGR00070">
    <property type="entry name" value="hisG"/>
    <property type="match status" value="1"/>
</dbReference>
<dbReference type="PANTHER" id="PTHR21403:SF8">
    <property type="entry name" value="ATP PHOSPHORIBOSYLTRANSFERASE"/>
    <property type="match status" value="1"/>
</dbReference>
<dbReference type="PANTHER" id="PTHR21403">
    <property type="entry name" value="ATP PHOSPHORIBOSYLTRANSFERASE ATP-PRTASE"/>
    <property type="match status" value="1"/>
</dbReference>
<dbReference type="Pfam" id="PF01634">
    <property type="entry name" value="HisG"/>
    <property type="match status" value="1"/>
</dbReference>
<dbReference type="SUPFAM" id="SSF53850">
    <property type="entry name" value="Periplasmic binding protein-like II"/>
    <property type="match status" value="1"/>
</dbReference>
<dbReference type="PROSITE" id="PS01316">
    <property type="entry name" value="ATP_P_PHORIBOSYLTR"/>
    <property type="match status" value="1"/>
</dbReference>
<comment type="function">
    <text evidence="1">Catalyzes the condensation of ATP and 5-phosphoribose 1-diphosphate to form N'-(5'-phosphoribosyl)-ATP (PR-ATP). Has a crucial role in the pathway because the rate of histidine biosynthesis seems to be controlled primarily by regulation of HisG enzymatic activity.</text>
</comment>
<comment type="catalytic activity">
    <reaction evidence="1">
        <text>1-(5-phospho-beta-D-ribosyl)-ATP + diphosphate = 5-phospho-alpha-D-ribose 1-diphosphate + ATP</text>
        <dbReference type="Rhea" id="RHEA:18473"/>
        <dbReference type="ChEBI" id="CHEBI:30616"/>
        <dbReference type="ChEBI" id="CHEBI:33019"/>
        <dbReference type="ChEBI" id="CHEBI:58017"/>
        <dbReference type="ChEBI" id="CHEBI:73183"/>
        <dbReference type="EC" id="2.4.2.17"/>
    </reaction>
</comment>
<comment type="pathway">
    <text evidence="1">Amino-acid biosynthesis; L-histidine biosynthesis; L-histidine from 5-phospho-alpha-D-ribose 1-diphosphate: step 1/9.</text>
</comment>
<comment type="subunit">
    <text evidence="1">Heteromultimer composed of HisG and HisZ subunits.</text>
</comment>
<comment type="subcellular location">
    <subcellularLocation>
        <location evidence="1">Cytoplasm</location>
    </subcellularLocation>
</comment>
<comment type="domain">
    <text>Lacks the C-terminal regulatory region which is replaced by HisZ.</text>
</comment>
<comment type="similarity">
    <text evidence="1">Belongs to the ATP phosphoribosyltransferase family. Short subfamily.</text>
</comment>
<protein>
    <recommendedName>
        <fullName evidence="1">ATP phosphoribosyltransferase</fullName>
        <shortName evidence="1">ATP-PRT</shortName>
        <shortName evidence="1">ATP-PRTase</shortName>
        <ecNumber evidence="1">2.4.2.17</ecNumber>
    </recommendedName>
</protein>
<proteinExistence type="inferred from homology"/>
<keyword id="KW-0028">Amino-acid biosynthesis</keyword>
<keyword id="KW-0067">ATP-binding</keyword>
<keyword id="KW-0963">Cytoplasm</keyword>
<keyword id="KW-0328">Glycosyltransferase</keyword>
<keyword id="KW-0368">Histidine biosynthesis</keyword>
<keyword id="KW-0547">Nucleotide-binding</keyword>
<keyword id="KW-1185">Reference proteome</keyword>
<keyword id="KW-0808">Transferase</keyword>
<gene>
    <name evidence="1" type="primary">hisG</name>
    <name type="ordered locus">P9211_05631</name>
</gene>
<evidence type="ECO:0000255" key="1">
    <source>
        <dbReference type="HAMAP-Rule" id="MF_01018"/>
    </source>
</evidence>
<accession>A9BEI4</accession>
<organism>
    <name type="scientific">Prochlorococcus marinus (strain MIT 9211)</name>
    <dbReference type="NCBI Taxonomy" id="93059"/>
    <lineage>
        <taxon>Bacteria</taxon>
        <taxon>Bacillati</taxon>
        <taxon>Cyanobacteriota</taxon>
        <taxon>Cyanophyceae</taxon>
        <taxon>Synechococcales</taxon>
        <taxon>Prochlorococcaceae</taxon>
        <taxon>Prochlorococcus</taxon>
    </lineage>
</organism>
<sequence length="216" mass="23315">MITVALAKGALLKDSVTRFAKAGLDFSAVLDPSNRQLMVPSECGRAKALLVRNGDVPVYVAYGQAQLGVVGFDVLSEHQMPVANLVDLSFGECHMAVAVKETSHYRSAADLPAHCRVASKFTNCARRFFEDIDLPVELVHLTGSVELGPLTGMAEAIVDLVATGRTLRENGLIEIDHLFDSTARLIGHPLSLRLDSGDLRSVVEAMNTNDKSIPFK</sequence>
<feature type="chain" id="PRO_1000135288" description="ATP phosphoribosyltransferase">
    <location>
        <begin position="1"/>
        <end position="216"/>
    </location>
</feature>